<organism>
    <name type="scientific">Arabidopsis thaliana</name>
    <name type="common">Mouse-ear cress</name>
    <dbReference type="NCBI Taxonomy" id="3702"/>
    <lineage>
        <taxon>Eukaryota</taxon>
        <taxon>Viridiplantae</taxon>
        <taxon>Streptophyta</taxon>
        <taxon>Embryophyta</taxon>
        <taxon>Tracheophyta</taxon>
        <taxon>Spermatophyta</taxon>
        <taxon>Magnoliopsida</taxon>
        <taxon>eudicotyledons</taxon>
        <taxon>Gunneridae</taxon>
        <taxon>Pentapetalae</taxon>
        <taxon>rosids</taxon>
        <taxon>malvids</taxon>
        <taxon>Brassicales</taxon>
        <taxon>Brassicaceae</taxon>
        <taxon>Camelineae</taxon>
        <taxon>Arabidopsis</taxon>
    </lineage>
</organism>
<protein>
    <recommendedName>
        <fullName>Transcription repressor OFP18</fullName>
    </recommendedName>
    <alternativeName>
        <fullName>Ovate family protein 18</fullName>
        <shortName>AtOFP18</shortName>
    </alternativeName>
</protein>
<sequence>MVRKMKLPFLNKNTSSSSFSSNSSSSSSSWPWPSSHQQNLKTISSKASFIVNKPKDVYEPEPPPRSFSSSPSSSSYSSFSSTSHAIENPPEIESIENVIKGLKSSKRLIFERRGTSNSILEEATKRDDHEEEEDGLMLLSLESNDPYTDFKNSMEKMVEVHVLHHDWISLEKLLFWFLKVNVKASHRYIFAAFVDLVLNLAVGPSKDVAGEPNSDVVVEDSLSSSWPVSLYSSSDENSSTSVRFLPETSIGEKGRDVCCLSSLFELEEKIKDNIDPNDYVSS</sequence>
<reference key="1">
    <citation type="journal article" date="2000" name="Nature">
        <title>Sequence and analysis of chromosome 3 of the plant Arabidopsis thaliana.</title>
        <authorList>
            <person name="Salanoubat M."/>
            <person name="Lemcke K."/>
            <person name="Rieger M."/>
            <person name="Ansorge W."/>
            <person name="Unseld M."/>
            <person name="Fartmann B."/>
            <person name="Valle G."/>
            <person name="Bloecker H."/>
            <person name="Perez-Alonso M."/>
            <person name="Obermaier B."/>
            <person name="Delseny M."/>
            <person name="Boutry M."/>
            <person name="Grivell L.A."/>
            <person name="Mache R."/>
            <person name="Puigdomenech P."/>
            <person name="De Simone V."/>
            <person name="Choisne N."/>
            <person name="Artiguenave F."/>
            <person name="Robert C."/>
            <person name="Brottier P."/>
            <person name="Wincker P."/>
            <person name="Cattolico L."/>
            <person name="Weissenbach J."/>
            <person name="Saurin W."/>
            <person name="Quetier F."/>
            <person name="Schaefer M."/>
            <person name="Mueller-Auer S."/>
            <person name="Gabel C."/>
            <person name="Fuchs M."/>
            <person name="Benes V."/>
            <person name="Wurmbach E."/>
            <person name="Drzonek H."/>
            <person name="Erfle H."/>
            <person name="Jordan N."/>
            <person name="Bangert S."/>
            <person name="Wiedelmann R."/>
            <person name="Kranz H."/>
            <person name="Voss H."/>
            <person name="Holland R."/>
            <person name="Brandt P."/>
            <person name="Nyakatura G."/>
            <person name="Vezzi A."/>
            <person name="D'Angelo M."/>
            <person name="Pallavicini A."/>
            <person name="Toppo S."/>
            <person name="Simionati B."/>
            <person name="Conrad A."/>
            <person name="Hornischer K."/>
            <person name="Kauer G."/>
            <person name="Loehnert T.-H."/>
            <person name="Nordsiek G."/>
            <person name="Reichelt J."/>
            <person name="Scharfe M."/>
            <person name="Schoen O."/>
            <person name="Bargues M."/>
            <person name="Terol J."/>
            <person name="Climent J."/>
            <person name="Navarro P."/>
            <person name="Collado C."/>
            <person name="Perez-Perez A."/>
            <person name="Ottenwaelder B."/>
            <person name="Duchemin D."/>
            <person name="Cooke R."/>
            <person name="Laudie M."/>
            <person name="Berger-Llauro C."/>
            <person name="Purnelle B."/>
            <person name="Masuy D."/>
            <person name="de Haan M."/>
            <person name="Maarse A.C."/>
            <person name="Alcaraz J.-P."/>
            <person name="Cottet A."/>
            <person name="Casacuberta E."/>
            <person name="Monfort A."/>
            <person name="Argiriou A."/>
            <person name="Flores M."/>
            <person name="Liguori R."/>
            <person name="Vitale D."/>
            <person name="Mannhaupt G."/>
            <person name="Haase D."/>
            <person name="Schoof H."/>
            <person name="Rudd S."/>
            <person name="Zaccaria P."/>
            <person name="Mewes H.-W."/>
            <person name="Mayer K.F.X."/>
            <person name="Kaul S."/>
            <person name="Town C.D."/>
            <person name="Koo H.L."/>
            <person name="Tallon L.J."/>
            <person name="Jenkins J."/>
            <person name="Rooney T."/>
            <person name="Rizzo M."/>
            <person name="Walts A."/>
            <person name="Utterback T."/>
            <person name="Fujii C.Y."/>
            <person name="Shea T.P."/>
            <person name="Creasy T.H."/>
            <person name="Haas B."/>
            <person name="Maiti R."/>
            <person name="Wu D."/>
            <person name="Peterson J."/>
            <person name="Van Aken S."/>
            <person name="Pai G."/>
            <person name="Militscher J."/>
            <person name="Sellers P."/>
            <person name="Gill J.E."/>
            <person name="Feldblyum T.V."/>
            <person name="Preuss D."/>
            <person name="Lin X."/>
            <person name="Nierman W.C."/>
            <person name="Salzberg S.L."/>
            <person name="White O."/>
            <person name="Venter J.C."/>
            <person name="Fraser C.M."/>
            <person name="Kaneko T."/>
            <person name="Nakamura Y."/>
            <person name="Sato S."/>
            <person name="Kato T."/>
            <person name="Asamizu E."/>
            <person name="Sasamoto S."/>
            <person name="Kimura T."/>
            <person name="Idesawa K."/>
            <person name="Kawashima K."/>
            <person name="Kishida Y."/>
            <person name="Kiyokawa C."/>
            <person name="Kohara M."/>
            <person name="Matsumoto M."/>
            <person name="Matsuno A."/>
            <person name="Muraki A."/>
            <person name="Nakayama S."/>
            <person name="Nakazaki N."/>
            <person name="Shinpo S."/>
            <person name="Takeuchi C."/>
            <person name="Wada T."/>
            <person name="Watanabe A."/>
            <person name="Yamada M."/>
            <person name="Yasuda M."/>
            <person name="Tabata S."/>
        </authorList>
    </citation>
    <scope>NUCLEOTIDE SEQUENCE [LARGE SCALE GENOMIC DNA]</scope>
    <source>
        <strain>cv. Columbia</strain>
    </source>
</reference>
<reference key="2">
    <citation type="journal article" date="2017" name="Plant J.">
        <title>Araport11: a complete reannotation of the Arabidopsis thaliana reference genome.</title>
        <authorList>
            <person name="Cheng C.Y."/>
            <person name="Krishnakumar V."/>
            <person name="Chan A.P."/>
            <person name="Thibaud-Nissen F."/>
            <person name="Schobel S."/>
            <person name="Town C.D."/>
        </authorList>
    </citation>
    <scope>GENOME REANNOTATION</scope>
    <source>
        <strain>cv. Columbia</strain>
    </source>
</reference>
<reference key="3">
    <citation type="submission" date="2002-03" db="EMBL/GenBank/DDBJ databases">
        <title>Full-length cDNA from Arabidopsis thaliana.</title>
        <authorList>
            <person name="Brover V.V."/>
            <person name="Troukhan M.E."/>
            <person name="Alexandrov N.A."/>
            <person name="Lu Y.-P."/>
            <person name="Flavell R.B."/>
            <person name="Feldmann K.A."/>
        </authorList>
    </citation>
    <scope>NUCLEOTIDE SEQUENCE [LARGE SCALE MRNA]</scope>
</reference>
<reference key="4">
    <citation type="journal article" date="2011" name="PLoS ONE">
        <title>Arabidopsis ovate family proteins, a novel transcriptional repressor family, control multiple aspects of plant growth and development.</title>
        <authorList>
            <person name="Wang S."/>
            <person name="Chang Y."/>
            <person name="Guo J."/>
            <person name="Zeng Q."/>
            <person name="Ellis B.E."/>
            <person name="Chen J.G."/>
        </authorList>
    </citation>
    <scope>FUNCTION</scope>
    <scope>TISSUE SPECIFICITY</scope>
    <scope>GENE FAMILY</scope>
</reference>
<gene>
    <name type="primary">OFP18</name>
    <name type="ordered locus">At3g52540</name>
    <name type="ORF">F22O6.80</name>
</gene>
<proteinExistence type="evidence at transcript level"/>
<accession>Q9SVD5</accession>
<accession>Q8L8M7</accession>
<name>OFP18_ARATH</name>
<keyword id="KW-0539">Nucleus</keyword>
<keyword id="KW-1185">Reference proteome</keyword>
<keyword id="KW-0678">Repressor</keyword>
<keyword id="KW-0804">Transcription</keyword>
<keyword id="KW-0805">Transcription regulation</keyword>
<comment type="function">
    <text evidence="4">Transcriptional repressor that regulates multiple aspects of plant growth and development through the regulation of BEL1-LIKE (BLH) and KNOX TALE (KNAT) homeodomain transcription factors.</text>
</comment>
<comment type="subcellular location">
    <subcellularLocation>
        <location evidence="1">Nucleus</location>
    </subcellularLocation>
</comment>
<comment type="tissue specificity">
    <text evidence="4">Expressed in roots and shoots.</text>
</comment>
<comment type="miscellaneous">
    <text evidence="6">Plants over-expressing OFP18 show small rosette size, late flowering, reduced fertilization and blunt-end siliques.</text>
</comment>
<feature type="chain" id="PRO_0000429687" description="Transcription repressor OFP18">
    <location>
        <begin position="1"/>
        <end position="282"/>
    </location>
</feature>
<feature type="domain" description="OVATE" evidence="2">
    <location>
        <begin position="139"/>
        <end position="199"/>
    </location>
</feature>
<feature type="region of interest" description="Disordered" evidence="3">
    <location>
        <begin position="1"/>
        <end position="85"/>
    </location>
</feature>
<feature type="compositionally biased region" description="Low complexity" evidence="3">
    <location>
        <begin position="15"/>
        <end position="35"/>
    </location>
</feature>
<feature type="compositionally biased region" description="Polar residues" evidence="3">
    <location>
        <begin position="36"/>
        <end position="47"/>
    </location>
</feature>
<feature type="compositionally biased region" description="Low complexity" evidence="3">
    <location>
        <begin position="66"/>
        <end position="85"/>
    </location>
</feature>
<feature type="sequence conflict" description="In Ref. 3; AAM67212." evidence="5" ref="3">
    <original>S</original>
    <variation>F</variation>
    <location>
        <position position="78"/>
    </location>
</feature>
<evidence type="ECO:0000250" key="1"/>
<evidence type="ECO:0000255" key="2">
    <source>
        <dbReference type="PROSITE-ProRule" id="PRU01090"/>
    </source>
</evidence>
<evidence type="ECO:0000256" key="3">
    <source>
        <dbReference type="SAM" id="MobiDB-lite"/>
    </source>
</evidence>
<evidence type="ECO:0000269" key="4">
    <source>
    </source>
</evidence>
<evidence type="ECO:0000305" key="5"/>
<evidence type="ECO:0000305" key="6">
    <source>
    </source>
</evidence>
<dbReference type="EMBL" id="AL050300">
    <property type="protein sequence ID" value="CAB43415.1"/>
    <property type="molecule type" value="Genomic_DNA"/>
</dbReference>
<dbReference type="EMBL" id="CP002686">
    <property type="protein sequence ID" value="AEE78957.1"/>
    <property type="molecule type" value="Genomic_DNA"/>
</dbReference>
<dbReference type="EMBL" id="AY088906">
    <property type="protein sequence ID" value="AAM67212.1"/>
    <property type="molecule type" value="mRNA"/>
</dbReference>
<dbReference type="PIR" id="T08445">
    <property type="entry name" value="T08445"/>
</dbReference>
<dbReference type="RefSeq" id="NP_566967.1">
    <property type="nucleotide sequence ID" value="NM_115114.4"/>
</dbReference>
<dbReference type="BioGRID" id="9738">
    <property type="interactions" value="8"/>
</dbReference>
<dbReference type="IntAct" id="Q9SVD5">
    <property type="interactions" value="8"/>
</dbReference>
<dbReference type="STRING" id="3702.Q9SVD5"/>
<dbReference type="PaxDb" id="3702-AT3G52540.1"/>
<dbReference type="EnsemblPlants" id="AT3G52540.1">
    <property type="protein sequence ID" value="AT3G52540.1"/>
    <property type="gene ID" value="AT3G52540"/>
</dbReference>
<dbReference type="GeneID" id="824420"/>
<dbReference type="Gramene" id="AT3G52540.1">
    <property type="protein sequence ID" value="AT3G52540.1"/>
    <property type="gene ID" value="AT3G52540"/>
</dbReference>
<dbReference type="KEGG" id="ath:AT3G52540"/>
<dbReference type="Araport" id="AT3G52540"/>
<dbReference type="TAIR" id="AT3G52540">
    <property type="gene designation" value="OFP18"/>
</dbReference>
<dbReference type="eggNOG" id="ENOG502RFQ4">
    <property type="taxonomic scope" value="Eukaryota"/>
</dbReference>
<dbReference type="HOGENOM" id="CLU_066339_1_0_1"/>
<dbReference type="InParanoid" id="Q9SVD5"/>
<dbReference type="OMA" id="WFLKVNV"/>
<dbReference type="PRO" id="PR:Q9SVD5"/>
<dbReference type="Proteomes" id="UP000006548">
    <property type="component" value="Chromosome 3"/>
</dbReference>
<dbReference type="ExpressionAtlas" id="Q9SVD5">
    <property type="expression patterns" value="baseline and differential"/>
</dbReference>
<dbReference type="GO" id="GO:0005634">
    <property type="term" value="C:nucleus"/>
    <property type="evidence" value="ECO:0007669"/>
    <property type="project" value="UniProtKB-SubCell"/>
</dbReference>
<dbReference type="GO" id="GO:0045892">
    <property type="term" value="P:negative regulation of DNA-templated transcription"/>
    <property type="evidence" value="ECO:0000314"/>
    <property type="project" value="TAIR"/>
</dbReference>
<dbReference type="InterPro" id="IPR038933">
    <property type="entry name" value="Ovate"/>
</dbReference>
<dbReference type="InterPro" id="IPR006458">
    <property type="entry name" value="Ovate_C"/>
</dbReference>
<dbReference type="NCBIfam" id="TIGR01568">
    <property type="entry name" value="A_thal_3678"/>
    <property type="match status" value="1"/>
</dbReference>
<dbReference type="PANTHER" id="PTHR33057:SF98">
    <property type="entry name" value="TRANSCRIPTION REPRESSOR OFP18"/>
    <property type="match status" value="1"/>
</dbReference>
<dbReference type="PANTHER" id="PTHR33057">
    <property type="entry name" value="TRANSCRIPTION REPRESSOR OFP7-RELATED"/>
    <property type="match status" value="1"/>
</dbReference>
<dbReference type="Pfam" id="PF04844">
    <property type="entry name" value="Ovate"/>
    <property type="match status" value="1"/>
</dbReference>
<dbReference type="PROSITE" id="PS51754">
    <property type="entry name" value="OVATE"/>
    <property type="match status" value="1"/>
</dbReference>